<gene>
    <name type="primary">APOC4</name>
</gene>
<comment type="function">
    <text evidence="1">May participate in lipoprotein metabolism.</text>
</comment>
<comment type="subcellular location">
    <subcellularLocation>
        <location evidence="1">Secreted</location>
    </subcellularLocation>
</comment>
<comment type="similarity">
    <text evidence="3">Belongs to the apolipoprotein C4 family.</text>
</comment>
<sequence length="127" mass="14398">MSFSGHRSWAQHPLCFCILVLACVVVGQQEATGASPSPPPETSSSSWSLVPGKVKEWMEPLVTRPRERWPWFWGLEAFQGFVQTYFEDHLKDLVSRTQAWLHSSKDSLLSKAHNLCPQLLCEKGDQD</sequence>
<dbReference type="EMBL" id="JWIN01034738">
    <property type="status" value="NOT_ANNOTATED_CDS"/>
    <property type="molecule type" value="Genomic_DNA"/>
</dbReference>
<dbReference type="STRING" id="9838.ENSCDRP00005008863"/>
<dbReference type="GO" id="GO:0034364">
    <property type="term" value="C:high-density lipoprotein particle"/>
    <property type="evidence" value="ECO:0007669"/>
    <property type="project" value="Ensembl"/>
</dbReference>
<dbReference type="GO" id="GO:0034361">
    <property type="term" value="C:very-low-density lipoprotein particle"/>
    <property type="evidence" value="ECO:0007669"/>
    <property type="project" value="Ensembl"/>
</dbReference>
<dbReference type="GO" id="GO:0019915">
    <property type="term" value="P:lipid storage"/>
    <property type="evidence" value="ECO:0007669"/>
    <property type="project" value="Ensembl"/>
</dbReference>
<dbReference type="GO" id="GO:0006869">
    <property type="term" value="P:lipid transport"/>
    <property type="evidence" value="ECO:0007669"/>
    <property type="project" value="UniProtKB-KW"/>
</dbReference>
<dbReference type="GO" id="GO:0010890">
    <property type="term" value="P:positive regulation of triglyceride storage"/>
    <property type="evidence" value="ECO:0007669"/>
    <property type="project" value="TreeGrafter"/>
</dbReference>
<dbReference type="GO" id="GO:0070328">
    <property type="term" value="P:triglyceride homeostasis"/>
    <property type="evidence" value="ECO:0007669"/>
    <property type="project" value="Ensembl"/>
</dbReference>
<dbReference type="InterPro" id="IPR028120">
    <property type="entry name" value="APOC4"/>
</dbReference>
<dbReference type="PANTHER" id="PTHR32288">
    <property type="entry name" value="APOLIPOPROTEIN C-IV"/>
    <property type="match status" value="1"/>
</dbReference>
<dbReference type="PANTHER" id="PTHR32288:SF0">
    <property type="entry name" value="APOLIPOPROTEIN C-IV"/>
    <property type="match status" value="1"/>
</dbReference>
<dbReference type="Pfam" id="PF15119">
    <property type="entry name" value="APOC4"/>
    <property type="match status" value="1"/>
</dbReference>
<keyword id="KW-0445">Lipid transport</keyword>
<keyword id="KW-0964">Secreted</keyword>
<keyword id="KW-0732">Signal</keyword>
<keyword id="KW-0813">Transport</keyword>
<feature type="signal peptide" evidence="2">
    <location>
        <begin position="1"/>
        <end position="27"/>
    </location>
</feature>
<feature type="chain" id="PRO_0000437472" description="Apolipoprotein C-IV">
    <location>
        <begin position="28"/>
        <end position="127"/>
    </location>
</feature>
<protein>
    <recommendedName>
        <fullName>Apolipoprotein C-IV</fullName>
        <shortName>Apo-CIV</shortName>
        <shortName>ApoC-IV</shortName>
    </recommendedName>
    <alternativeName>
        <fullName>Apolipoprotein C4</fullName>
    </alternativeName>
</protein>
<proteinExistence type="inferred from homology"/>
<evidence type="ECO:0000250" key="1"/>
<evidence type="ECO:0000250" key="2">
    <source>
        <dbReference type="UniProtKB" id="P55057"/>
    </source>
</evidence>
<evidence type="ECO:0000305" key="3"/>
<name>APOC4_CAMDR</name>
<accession>P0DOC4</accession>
<reference key="1">
    <citation type="submission" date="2014-12" db="EMBL/GenBank/DDBJ databases">
        <title>The de novo genome assembly and annotation of a female domestic dromedary of North African origin.</title>
        <authorList>
            <person name="Fitak R."/>
            <person name="Mohandesan E."/>
            <person name="Burger P.A."/>
            <person name="Jukka C."/>
        </authorList>
    </citation>
    <scope>NUCLEOTIDE SEQUENCE [LARGE SCALE GENOMIC DNA]</scope>
</reference>
<reference key="2">
    <citation type="unpublished observations" date="2016-07">
        <authorList>
            <person name="Puppione D.L."/>
        </authorList>
    </citation>
    <scope>IDENTIFICATION</scope>
</reference>
<organism>
    <name type="scientific">Camelus dromedarius</name>
    <name type="common">Dromedary</name>
    <name type="synonym">Arabian camel</name>
    <dbReference type="NCBI Taxonomy" id="9838"/>
    <lineage>
        <taxon>Eukaryota</taxon>
        <taxon>Metazoa</taxon>
        <taxon>Chordata</taxon>
        <taxon>Craniata</taxon>
        <taxon>Vertebrata</taxon>
        <taxon>Euteleostomi</taxon>
        <taxon>Mammalia</taxon>
        <taxon>Eutheria</taxon>
        <taxon>Laurasiatheria</taxon>
        <taxon>Artiodactyla</taxon>
        <taxon>Tylopoda</taxon>
        <taxon>Camelidae</taxon>
        <taxon>Camelus</taxon>
    </lineage>
</organism>